<accession>C6Y4B0</accession>
<dbReference type="EMBL" id="CU329670">
    <property type="protein sequence ID" value="CBA11504.1"/>
    <property type="molecule type" value="Genomic_DNA"/>
</dbReference>
<dbReference type="RefSeq" id="XP_002742513.1">
    <property type="nucleotide sequence ID" value="XM_002742467.2"/>
</dbReference>
<dbReference type="BioGRID" id="1028619">
    <property type="interactions" value="1"/>
</dbReference>
<dbReference type="PaxDb" id="4896-SPAC27E2.14.1"/>
<dbReference type="EnsemblFungi" id="SPAC27E2.14.1">
    <property type="protein sequence ID" value="SPAC27E2.14.1:pep"/>
    <property type="gene ID" value="SPAC27E2.14"/>
</dbReference>
<dbReference type="PomBase" id="SPAC27E2.14"/>
<dbReference type="VEuPathDB" id="FungiDB:SPAC27E2.14"/>
<dbReference type="HOGENOM" id="CLU_3377357_0_0_1"/>
<dbReference type="InParanoid" id="C6Y4B0"/>
<dbReference type="PRO" id="PR:C6Y4B0"/>
<dbReference type="Proteomes" id="UP000002485">
    <property type="component" value="Chromosome I"/>
</dbReference>
<feature type="chain" id="PRO_0000389146" description="Uncharacterized protein C27E2.14">
    <location>
        <begin position="1"/>
        <end position="34"/>
    </location>
</feature>
<feature type="region of interest" description="Disordered" evidence="1">
    <location>
        <begin position="1"/>
        <end position="34"/>
    </location>
</feature>
<feature type="compositionally biased region" description="Basic residues" evidence="1">
    <location>
        <begin position="25"/>
        <end position="34"/>
    </location>
</feature>
<organism>
    <name type="scientific">Schizosaccharomyces pombe (strain 972 / ATCC 24843)</name>
    <name type="common">Fission yeast</name>
    <dbReference type="NCBI Taxonomy" id="284812"/>
    <lineage>
        <taxon>Eukaryota</taxon>
        <taxon>Fungi</taxon>
        <taxon>Dikarya</taxon>
        <taxon>Ascomycota</taxon>
        <taxon>Taphrinomycotina</taxon>
        <taxon>Schizosaccharomycetes</taxon>
        <taxon>Schizosaccharomycetales</taxon>
        <taxon>Schizosaccharomycetaceae</taxon>
        <taxon>Schizosaccharomyces</taxon>
    </lineage>
</organism>
<sequence length="34" mass="4118">MRLRRLFKQPSTRVLGVTNCPRQQGHQKRREQPD</sequence>
<name>YEIN_SCHPO</name>
<proteinExistence type="evidence at transcript level"/>
<reference key="1">
    <citation type="journal article" date="2002" name="Nature">
        <title>The genome sequence of Schizosaccharomyces pombe.</title>
        <authorList>
            <person name="Wood V."/>
            <person name="Gwilliam R."/>
            <person name="Rajandream M.A."/>
            <person name="Lyne M.H."/>
            <person name="Lyne R."/>
            <person name="Stewart A."/>
            <person name="Sgouros J.G."/>
            <person name="Peat N."/>
            <person name="Hayles J."/>
            <person name="Baker S.G."/>
            <person name="Basham D."/>
            <person name="Bowman S."/>
            <person name="Brooks K."/>
            <person name="Brown D."/>
            <person name="Brown S."/>
            <person name="Chillingworth T."/>
            <person name="Churcher C.M."/>
            <person name="Collins M."/>
            <person name="Connor R."/>
            <person name="Cronin A."/>
            <person name="Davis P."/>
            <person name="Feltwell T."/>
            <person name="Fraser A."/>
            <person name="Gentles S."/>
            <person name="Goble A."/>
            <person name="Hamlin N."/>
            <person name="Harris D.E."/>
            <person name="Hidalgo J."/>
            <person name="Hodgson G."/>
            <person name="Holroyd S."/>
            <person name="Hornsby T."/>
            <person name="Howarth S."/>
            <person name="Huckle E.J."/>
            <person name="Hunt S."/>
            <person name="Jagels K."/>
            <person name="James K.D."/>
            <person name="Jones L."/>
            <person name="Jones M."/>
            <person name="Leather S."/>
            <person name="McDonald S."/>
            <person name="McLean J."/>
            <person name="Mooney P."/>
            <person name="Moule S."/>
            <person name="Mungall K.L."/>
            <person name="Murphy L.D."/>
            <person name="Niblett D."/>
            <person name="Odell C."/>
            <person name="Oliver K."/>
            <person name="O'Neil S."/>
            <person name="Pearson D."/>
            <person name="Quail M.A."/>
            <person name="Rabbinowitsch E."/>
            <person name="Rutherford K.M."/>
            <person name="Rutter S."/>
            <person name="Saunders D."/>
            <person name="Seeger K."/>
            <person name="Sharp S."/>
            <person name="Skelton J."/>
            <person name="Simmonds M.N."/>
            <person name="Squares R."/>
            <person name="Squares S."/>
            <person name="Stevens K."/>
            <person name="Taylor K."/>
            <person name="Taylor R.G."/>
            <person name="Tivey A."/>
            <person name="Walsh S.V."/>
            <person name="Warren T."/>
            <person name="Whitehead S."/>
            <person name="Woodward J.R."/>
            <person name="Volckaert G."/>
            <person name="Aert R."/>
            <person name="Robben J."/>
            <person name="Grymonprez B."/>
            <person name="Weltjens I."/>
            <person name="Vanstreels E."/>
            <person name="Rieger M."/>
            <person name="Schaefer M."/>
            <person name="Mueller-Auer S."/>
            <person name="Gabel C."/>
            <person name="Fuchs M."/>
            <person name="Duesterhoeft A."/>
            <person name="Fritzc C."/>
            <person name="Holzer E."/>
            <person name="Moestl D."/>
            <person name="Hilbert H."/>
            <person name="Borzym K."/>
            <person name="Langer I."/>
            <person name="Beck A."/>
            <person name="Lehrach H."/>
            <person name="Reinhardt R."/>
            <person name="Pohl T.M."/>
            <person name="Eger P."/>
            <person name="Zimmermann W."/>
            <person name="Wedler H."/>
            <person name="Wambutt R."/>
            <person name="Purnelle B."/>
            <person name="Goffeau A."/>
            <person name="Cadieu E."/>
            <person name="Dreano S."/>
            <person name="Gloux S."/>
            <person name="Lelaure V."/>
            <person name="Mottier S."/>
            <person name="Galibert F."/>
            <person name="Aves S.J."/>
            <person name="Xiang Z."/>
            <person name="Hunt C."/>
            <person name="Moore K."/>
            <person name="Hurst S.M."/>
            <person name="Lucas M."/>
            <person name="Rochet M."/>
            <person name="Gaillardin C."/>
            <person name="Tallada V.A."/>
            <person name="Garzon A."/>
            <person name="Thode G."/>
            <person name="Daga R.R."/>
            <person name="Cruzado L."/>
            <person name="Jimenez J."/>
            <person name="Sanchez M."/>
            <person name="del Rey F."/>
            <person name="Benito J."/>
            <person name="Dominguez A."/>
            <person name="Revuelta J.L."/>
            <person name="Moreno S."/>
            <person name="Armstrong J."/>
            <person name="Forsburg S.L."/>
            <person name="Cerutti L."/>
            <person name="Lowe T."/>
            <person name="McCombie W.R."/>
            <person name="Paulsen I."/>
            <person name="Potashkin J."/>
            <person name="Shpakovski G.V."/>
            <person name="Ussery D."/>
            <person name="Barrell B.G."/>
            <person name="Nurse P."/>
        </authorList>
    </citation>
    <scope>NUCLEOTIDE SEQUENCE [LARGE SCALE GENOMIC DNA]</scope>
    <source>
        <strain>972 / ATCC 24843</strain>
    </source>
</reference>
<reference key="2">
    <citation type="journal article" date="2008" name="Nature">
        <title>Dynamic repertoire of a eukaryotic transcriptome surveyed at single-nucleotide resolution.</title>
        <authorList>
            <person name="Wilhelm B.T."/>
            <person name="Marguerat S."/>
            <person name="Watt S."/>
            <person name="Schubert F."/>
            <person name="Wood V."/>
            <person name="Goodhead I."/>
            <person name="Penkett C.J."/>
            <person name="Rogers J."/>
            <person name="Baehler J."/>
        </authorList>
    </citation>
    <scope>IDENTIFICATION</scope>
</reference>
<evidence type="ECO:0000256" key="1">
    <source>
        <dbReference type="SAM" id="MobiDB-lite"/>
    </source>
</evidence>
<gene>
    <name type="ORF">SPAC27E2.14</name>
</gene>
<protein>
    <recommendedName>
        <fullName>Uncharacterized protein C27E2.14</fullName>
    </recommendedName>
</protein>
<keyword id="KW-1185">Reference proteome</keyword>